<protein>
    <recommendedName>
        <fullName>Protein YOP1</fullName>
    </recommendedName>
</protein>
<gene>
    <name type="primary">YOP1</name>
    <name type="ordered locus">KLLA0E06578g</name>
</gene>
<dbReference type="EMBL" id="CR382125">
    <property type="protein sequence ID" value="CAG99333.1"/>
    <property type="molecule type" value="Genomic_DNA"/>
</dbReference>
<dbReference type="RefSeq" id="XP_454246.1">
    <property type="nucleotide sequence ID" value="XM_454246.1"/>
</dbReference>
<dbReference type="FunCoup" id="Q6CP93">
    <property type="interactions" value="375"/>
</dbReference>
<dbReference type="STRING" id="284590.Q6CP93"/>
<dbReference type="PaxDb" id="284590-Q6CP93"/>
<dbReference type="KEGG" id="kla:KLLA0_E06601g"/>
<dbReference type="eggNOG" id="KOG1725">
    <property type="taxonomic scope" value="Eukaryota"/>
</dbReference>
<dbReference type="HOGENOM" id="CLU_028431_2_1_1"/>
<dbReference type="InParanoid" id="Q6CP93"/>
<dbReference type="OMA" id="DTQYWVV"/>
<dbReference type="Proteomes" id="UP000000598">
    <property type="component" value="Chromosome E"/>
</dbReference>
<dbReference type="GO" id="GO:0005789">
    <property type="term" value="C:endoplasmic reticulum membrane"/>
    <property type="evidence" value="ECO:0007669"/>
    <property type="project" value="UniProtKB-SubCell"/>
</dbReference>
<dbReference type="GO" id="GO:0000139">
    <property type="term" value="C:Golgi membrane"/>
    <property type="evidence" value="ECO:0007669"/>
    <property type="project" value="UniProtKB-SubCell"/>
</dbReference>
<dbReference type="InterPro" id="IPR004345">
    <property type="entry name" value="TB2_DP1_HVA22"/>
</dbReference>
<dbReference type="PANTHER" id="PTHR12300">
    <property type="entry name" value="HVA22-LIKE PROTEINS"/>
    <property type="match status" value="1"/>
</dbReference>
<dbReference type="PANTHER" id="PTHR12300:SF161">
    <property type="entry name" value="RECEPTOR EXPRESSION-ENHANCING PROTEIN"/>
    <property type="match status" value="1"/>
</dbReference>
<dbReference type="Pfam" id="PF03134">
    <property type="entry name" value="TB2_DP1_HVA22"/>
    <property type="match status" value="1"/>
</dbReference>
<feature type="chain" id="PRO_0000101853" description="Protein YOP1">
    <location>
        <begin position="1"/>
        <end position="180"/>
    </location>
</feature>
<feature type="topological domain" description="Cytoplasmic" evidence="1">
    <location>
        <begin position="1"/>
        <end position="35"/>
    </location>
</feature>
<feature type="transmembrane region" description="Helical" evidence="1">
    <location>
        <begin position="36"/>
        <end position="55"/>
    </location>
</feature>
<feature type="topological domain" description="Lumenal" evidence="1">
    <location>
        <begin position="56"/>
        <end position="57"/>
    </location>
</feature>
<feature type="transmembrane region" description="Helical" evidence="1">
    <location>
        <begin position="58"/>
        <end position="78"/>
    </location>
</feature>
<feature type="topological domain" description="Cytoplasmic" evidence="1">
    <location>
        <begin position="79"/>
        <end position="88"/>
    </location>
</feature>
<feature type="transmembrane region" description="Helical" evidence="1">
    <location>
        <begin position="89"/>
        <end position="105"/>
    </location>
</feature>
<feature type="topological domain" description="Lumenal" evidence="1">
    <location>
        <begin position="106"/>
        <end position="108"/>
    </location>
</feature>
<feature type="transmembrane region" description="Helical" evidence="1">
    <location>
        <begin position="109"/>
        <end position="127"/>
    </location>
</feature>
<feature type="topological domain" description="Cytoplasmic" evidence="1">
    <location>
        <begin position="128"/>
        <end position="180"/>
    </location>
</feature>
<name>YOP1_KLULA</name>
<comment type="function">
    <text evidence="1">Required to generate and maintain the structure of the tubular endoplasmic reticulum network and the vacuole. Induces high curvature in membranes and causes membrane tubule formation. Involved in membrane/vesicle trafficking.</text>
</comment>
<comment type="subunit">
    <text evidence="1">Oligomer.</text>
</comment>
<comment type="subcellular location">
    <subcellularLocation>
        <location evidence="1">Endoplasmic reticulum membrane</location>
        <topology evidence="1">Multi-pass membrane protein</topology>
    </subcellularLocation>
    <subcellularLocation>
        <location evidence="1">Golgi apparatus membrane</location>
        <topology evidence="2">Multi-pass membrane protein</topology>
    </subcellularLocation>
</comment>
<comment type="domain">
    <text evidence="1">The short lumenal loops between transmembrane domains 1 and 2 and between transmembrane domains 3 and 4 may impart a wedge-like configuration, thus deforming membranes.</text>
</comment>
<comment type="similarity">
    <text evidence="3">Belongs to the DP1 family.</text>
</comment>
<sequence>MADYLKLFQDSLKGLDTKFAGNQILSRIEAQTKLPRSYVIVGLVAVYFLLIFINVGGIGEILSNFVGFCIPTYYSLKALKTATSTDDTQLLTYWIVFSFLSVIEFWSKAILYWVPFYWFFKTVFLLYIAIPSFGGAQLVYTRLISPFSDKYLPIVEGKSGELAQKVEAAANNAKASGYSR</sequence>
<organism>
    <name type="scientific">Kluyveromyces lactis (strain ATCC 8585 / CBS 2359 / DSM 70799 / NBRC 1267 / NRRL Y-1140 / WM37)</name>
    <name type="common">Yeast</name>
    <name type="synonym">Candida sphaerica</name>
    <dbReference type="NCBI Taxonomy" id="284590"/>
    <lineage>
        <taxon>Eukaryota</taxon>
        <taxon>Fungi</taxon>
        <taxon>Dikarya</taxon>
        <taxon>Ascomycota</taxon>
        <taxon>Saccharomycotina</taxon>
        <taxon>Saccharomycetes</taxon>
        <taxon>Saccharomycetales</taxon>
        <taxon>Saccharomycetaceae</taxon>
        <taxon>Kluyveromyces</taxon>
    </lineage>
</organism>
<keyword id="KW-0256">Endoplasmic reticulum</keyword>
<keyword id="KW-0333">Golgi apparatus</keyword>
<keyword id="KW-0472">Membrane</keyword>
<keyword id="KW-1185">Reference proteome</keyword>
<keyword id="KW-0812">Transmembrane</keyword>
<keyword id="KW-1133">Transmembrane helix</keyword>
<evidence type="ECO:0000250" key="1">
    <source>
        <dbReference type="UniProtKB" id="Q12402"/>
    </source>
</evidence>
<evidence type="ECO:0000255" key="2"/>
<evidence type="ECO:0000305" key="3"/>
<proteinExistence type="inferred from homology"/>
<reference key="1">
    <citation type="journal article" date="2004" name="Nature">
        <title>Genome evolution in yeasts.</title>
        <authorList>
            <person name="Dujon B."/>
            <person name="Sherman D."/>
            <person name="Fischer G."/>
            <person name="Durrens P."/>
            <person name="Casaregola S."/>
            <person name="Lafontaine I."/>
            <person name="de Montigny J."/>
            <person name="Marck C."/>
            <person name="Neuveglise C."/>
            <person name="Talla E."/>
            <person name="Goffard N."/>
            <person name="Frangeul L."/>
            <person name="Aigle M."/>
            <person name="Anthouard V."/>
            <person name="Babour A."/>
            <person name="Barbe V."/>
            <person name="Barnay S."/>
            <person name="Blanchin S."/>
            <person name="Beckerich J.-M."/>
            <person name="Beyne E."/>
            <person name="Bleykasten C."/>
            <person name="Boisrame A."/>
            <person name="Boyer J."/>
            <person name="Cattolico L."/>
            <person name="Confanioleri F."/>
            <person name="de Daruvar A."/>
            <person name="Despons L."/>
            <person name="Fabre E."/>
            <person name="Fairhead C."/>
            <person name="Ferry-Dumazet H."/>
            <person name="Groppi A."/>
            <person name="Hantraye F."/>
            <person name="Hennequin C."/>
            <person name="Jauniaux N."/>
            <person name="Joyet P."/>
            <person name="Kachouri R."/>
            <person name="Kerrest A."/>
            <person name="Koszul R."/>
            <person name="Lemaire M."/>
            <person name="Lesur I."/>
            <person name="Ma L."/>
            <person name="Muller H."/>
            <person name="Nicaud J.-M."/>
            <person name="Nikolski M."/>
            <person name="Oztas S."/>
            <person name="Ozier-Kalogeropoulos O."/>
            <person name="Pellenz S."/>
            <person name="Potier S."/>
            <person name="Richard G.-F."/>
            <person name="Straub M.-L."/>
            <person name="Suleau A."/>
            <person name="Swennen D."/>
            <person name="Tekaia F."/>
            <person name="Wesolowski-Louvel M."/>
            <person name="Westhof E."/>
            <person name="Wirth B."/>
            <person name="Zeniou-Meyer M."/>
            <person name="Zivanovic Y."/>
            <person name="Bolotin-Fukuhara M."/>
            <person name="Thierry A."/>
            <person name="Bouchier C."/>
            <person name="Caudron B."/>
            <person name="Scarpelli C."/>
            <person name="Gaillardin C."/>
            <person name="Weissenbach J."/>
            <person name="Wincker P."/>
            <person name="Souciet J.-L."/>
        </authorList>
    </citation>
    <scope>NUCLEOTIDE SEQUENCE [LARGE SCALE GENOMIC DNA]</scope>
    <source>
        <strain>ATCC 8585 / CBS 2359 / DSM 70799 / NBRC 1267 / NRRL Y-1140 / WM37</strain>
    </source>
</reference>
<accession>Q6CP93</accession>